<reference key="1">
    <citation type="journal article" date="1996" name="DNA Res.">
        <title>Sequence analysis of the genome of the unicellular cyanobacterium Synechocystis sp. strain PCC6803. II. Sequence determination of the entire genome and assignment of potential protein-coding regions.</title>
        <authorList>
            <person name="Kaneko T."/>
            <person name="Sato S."/>
            <person name="Kotani H."/>
            <person name="Tanaka A."/>
            <person name="Asamizu E."/>
            <person name="Nakamura Y."/>
            <person name="Miyajima N."/>
            <person name="Hirosawa M."/>
            <person name="Sugiura M."/>
            <person name="Sasamoto S."/>
            <person name="Kimura T."/>
            <person name="Hosouchi T."/>
            <person name="Matsuno A."/>
            <person name="Muraki A."/>
            <person name="Nakazaki N."/>
            <person name="Naruo K."/>
            <person name="Okumura S."/>
            <person name="Shimpo S."/>
            <person name="Takeuchi C."/>
            <person name="Wada T."/>
            <person name="Watanabe A."/>
            <person name="Yamada M."/>
            <person name="Yasuda M."/>
            <person name="Tabata S."/>
        </authorList>
    </citation>
    <scope>NUCLEOTIDE SEQUENCE [LARGE SCALE GENOMIC DNA]</scope>
    <source>
        <strain>ATCC 27184 / PCC 6803 / Kazusa</strain>
    </source>
</reference>
<accession>P73821</accession>
<proteinExistence type="inferred from homology"/>
<name>SERA_SYNY3</name>
<organism>
    <name type="scientific">Synechocystis sp. (strain ATCC 27184 / PCC 6803 / Kazusa)</name>
    <dbReference type="NCBI Taxonomy" id="1111708"/>
    <lineage>
        <taxon>Bacteria</taxon>
        <taxon>Bacillati</taxon>
        <taxon>Cyanobacteriota</taxon>
        <taxon>Cyanophyceae</taxon>
        <taxon>Synechococcales</taxon>
        <taxon>Merismopediaceae</taxon>
        <taxon>Synechocystis</taxon>
    </lineage>
</organism>
<feature type="chain" id="PRO_0000076007" description="D-3-phosphoglycerate dehydrogenase">
    <location>
        <begin position="1"/>
        <end position="554"/>
    </location>
</feature>
<feature type="domain" description="ACT" evidence="3">
    <location>
        <begin position="482"/>
        <end position="554"/>
    </location>
</feature>
<feature type="active site" evidence="1">
    <location>
        <position position="258"/>
    </location>
</feature>
<feature type="active site" evidence="1">
    <location>
        <position position="287"/>
    </location>
</feature>
<feature type="active site" description="Proton donor" evidence="1">
    <location>
        <position position="305"/>
    </location>
</feature>
<feature type="binding site" evidence="2">
    <location>
        <begin position="177"/>
        <end position="178"/>
    </location>
    <ligand>
        <name>NAD(+)</name>
        <dbReference type="ChEBI" id="CHEBI:57540"/>
    </ligand>
</feature>
<feature type="binding site" evidence="2">
    <location>
        <position position="197"/>
    </location>
    <ligand>
        <name>NAD(+)</name>
        <dbReference type="ChEBI" id="CHEBI:57540"/>
    </ligand>
</feature>
<feature type="binding site" evidence="2">
    <location>
        <begin position="256"/>
        <end position="258"/>
    </location>
    <ligand>
        <name>NAD(+)</name>
        <dbReference type="ChEBI" id="CHEBI:57540"/>
    </ligand>
</feature>
<feature type="binding site" evidence="2">
    <location>
        <position position="282"/>
    </location>
    <ligand>
        <name>NAD(+)</name>
        <dbReference type="ChEBI" id="CHEBI:57540"/>
    </ligand>
</feature>
<feature type="binding site" evidence="2">
    <location>
        <begin position="305"/>
        <end position="308"/>
    </location>
    <ligand>
        <name>NAD(+)</name>
        <dbReference type="ChEBI" id="CHEBI:57540"/>
    </ligand>
</feature>
<protein>
    <recommendedName>
        <fullName>D-3-phosphoglycerate dehydrogenase</fullName>
        <shortName>PGDH</shortName>
        <ecNumber evidence="2">1.1.1.95</ecNumber>
    </recommendedName>
    <alternativeName>
        <fullName evidence="2">2-oxoglutarate reductase</fullName>
        <ecNumber evidence="2">1.1.1.399</ecNumber>
    </alternativeName>
</protein>
<gene>
    <name type="primary">serA</name>
    <name type="ordered locus">sll1908</name>
</gene>
<comment type="function">
    <text evidence="2">Catalyzes the reversible oxidation of 3-phospho-D-glycerate to 3-phosphonooxypyruvate, the first step of the phosphorylated L-serine biosynthesis pathway. Also catalyzes the reversible oxidation of 2-hydroxyglutarate to 2-oxoglutarate.</text>
</comment>
<comment type="catalytic activity">
    <reaction evidence="2">
        <text>(2R)-3-phosphoglycerate + NAD(+) = 3-phosphooxypyruvate + NADH + H(+)</text>
        <dbReference type="Rhea" id="RHEA:12641"/>
        <dbReference type="ChEBI" id="CHEBI:15378"/>
        <dbReference type="ChEBI" id="CHEBI:18110"/>
        <dbReference type="ChEBI" id="CHEBI:57540"/>
        <dbReference type="ChEBI" id="CHEBI:57945"/>
        <dbReference type="ChEBI" id="CHEBI:58272"/>
        <dbReference type="EC" id="1.1.1.95"/>
    </reaction>
</comment>
<comment type="catalytic activity">
    <reaction evidence="2">
        <text>(R)-2-hydroxyglutarate + NAD(+) = 2-oxoglutarate + NADH + H(+)</text>
        <dbReference type="Rhea" id="RHEA:49612"/>
        <dbReference type="ChEBI" id="CHEBI:15378"/>
        <dbReference type="ChEBI" id="CHEBI:15801"/>
        <dbReference type="ChEBI" id="CHEBI:16810"/>
        <dbReference type="ChEBI" id="CHEBI:57540"/>
        <dbReference type="ChEBI" id="CHEBI:57945"/>
        <dbReference type="EC" id="1.1.1.399"/>
    </reaction>
</comment>
<comment type="pathway">
    <text>Amino-acid biosynthesis; L-serine biosynthesis; L-serine from 3-phospho-D-glycerate: step 1/3.</text>
</comment>
<comment type="similarity">
    <text evidence="4">Belongs to the D-isomer specific 2-hydroxyacid dehydrogenase family.</text>
</comment>
<dbReference type="EC" id="1.1.1.95" evidence="2"/>
<dbReference type="EC" id="1.1.1.399" evidence="2"/>
<dbReference type="EMBL" id="BA000022">
    <property type="protein sequence ID" value="BAA17878.1"/>
    <property type="molecule type" value="Genomic_DNA"/>
</dbReference>
<dbReference type="PIR" id="S75016">
    <property type="entry name" value="S75016"/>
</dbReference>
<dbReference type="SMR" id="P73821"/>
<dbReference type="FunCoup" id="P73821">
    <property type="interactions" value="349"/>
</dbReference>
<dbReference type="IntAct" id="P73821">
    <property type="interactions" value="6"/>
</dbReference>
<dbReference type="STRING" id="1148.gene:10498747"/>
<dbReference type="PaxDb" id="1148-1652961"/>
<dbReference type="EnsemblBacteria" id="BAA17878">
    <property type="protein sequence ID" value="BAA17878"/>
    <property type="gene ID" value="BAA17878"/>
</dbReference>
<dbReference type="KEGG" id="syn:sll1908"/>
<dbReference type="eggNOG" id="COG0111">
    <property type="taxonomic scope" value="Bacteria"/>
</dbReference>
<dbReference type="InParanoid" id="P73821"/>
<dbReference type="PhylomeDB" id="P73821"/>
<dbReference type="BioCyc" id="MetaCyc:MONOMER-22031"/>
<dbReference type="UniPathway" id="UPA00135">
    <property type="reaction ID" value="UER00196"/>
</dbReference>
<dbReference type="Proteomes" id="UP000001425">
    <property type="component" value="Chromosome"/>
</dbReference>
<dbReference type="GO" id="GO:0051287">
    <property type="term" value="F:NAD binding"/>
    <property type="evidence" value="ECO:0007669"/>
    <property type="project" value="InterPro"/>
</dbReference>
<dbReference type="GO" id="GO:0004617">
    <property type="term" value="F:phosphoglycerate dehydrogenase activity"/>
    <property type="evidence" value="ECO:0007669"/>
    <property type="project" value="UniProtKB-EC"/>
</dbReference>
<dbReference type="GO" id="GO:0006564">
    <property type="term" value="P:L-serine biosynthetic process"/>
    <property type="evidence" value="ECO:0007669"/>
    <property type="project" value="UniProtKB-KW"/>
</dbReference>
<dbReference type="CDD" id="cd04902">
    <property type="entry name" value="ACT_3PGDH-xct"/>
    <property type="match status" value="1"/>
</dbReference>
<dbReference type="CDD" id="cd12173">
    <property type="entry name" value="PGDH_4"/>
    <property type="match status" value="1"/>
</dbReference>
<dbReference type="FunFam" id="3.30.1330.90:FF:000003">
    <property type="entry name" value="D-3-phosphoglycerate dehydrogenase"/>
    <property type="match status" value="1"/>
</dbReference>
<dbReference type="FunFam" id="3.30.70.260:FF:000050">
    <property type="entry name" value="D-3-phosphoglycerate dehydrogenase"/>
    <property type="match status" value="1"/>
</dbReference>
<dbReference type="FunFam" id="3.40.50.720:FF:000021">
    <property type="entry name" value="D-3-phosphoglycerate dehydrogenase"/>
    <property type="match status" value="1"/>
</dbReference>
<dbReference type="Gene3D" id="3.30.70.260">
    <property type="match status" value="1"/>
</dbReference>
<dbReference type="Gene3D" id="3.30.1330.90">
    <property type="entry name" value="D-3-phosphoglycerate dehydrogenase, domain 3"/>
    <property type="match status" value="1"/>
</dbReference>
<dbReference type="Gene3D" id="3.40.50.720">
    <property type="entry name" value="NAD(P)-binding Rossmann-like Domain"/>
    <property type="match status" value="2"/>
</dbReference>
<dbReference type="InterPro" id="IPR045865">
    <property type="entry name" value="ACT-like_dom_sf"/>
</dbReference>
<dbReference type="InterPro" id="IPR002912">
    <property type="entry name" value="ACT_dom"/>
</dbReference>
<dbReference type="InterPro" id="IPR029009">
    <property type="entry name" value="ASB_dom_sf"/>
</dbReference>
<dbReference type="InterPro" id="IPR050857">
    <property type="entry name" value="D-2-hydroxyacid_DH"/>
</dbReference>
<dbReference type="InterPro" id="IPR006139">
    <property type="entry name" value="D-isomer_2_OHA_DH_cat_dom"/>
</dbReference>
<dbReference type="InterPro" id="IPR029753">
    <property type="entry name" value="D-isomer_DH_CS"/>
</dbReference>
<dbReference type="InterPro" id="IPR029752">
    <property type="entry name" value="D-isomer_DH_CS1"/>
</dbReference>
<dbReference type="InterPro" id="IPR006140">
    <property type="entry name" value="D-isomer_DH_NAD-bd"/>
</dbReference>
<dbReference type="InterPro" id="IPR036291">
    <property type="entry name" value="NAD(P)-bd_dom_sf"/>
</dbReference>
<dbReference type="InterPro" id="IPR006236">
    <property type="entry name" value="PGDH"/>
</dbReference>
<dbReference type="InterPro" id="IPR045626">
    <property type="entry name" value="PGDH_ASB_dom"/>
</dbReference>
<dbReference type="NCBIfam" id="TIGR01327">
    <property type="entry name" value="PGDH"/>
    <property type="match status" value="1"/>
</dbReference>
<dbReference type="PANTHER" id="PTHR42789">
    <property type="entry name" value="D-ISOMER SPECIFIC 2-HYDROXYACID DEHYDROGENASE FAMILY PROTEIN (AFU_ORTHOLOGUE AFUA_6G10090)"/>
    <property type="match status" value="1"/>
</dbReference>
<dbReference type="PANTHER" id="PTHR42789:SF1">
    <property type="entry name" value="D-ISOMER SPECIFIC 2-HYDROXYACID DEHYDROGENASE FAMILY PROTEIN (AFU_ORTHOLOGUE AFUA_6G10090)"/>
    <property type="match status" value="1"/>
</dbReference>
<dbReference type="Pfam" id="PF00389">
    <property type="entry name" value="2-Hacid_dh"/>
    <property type="match status" value="1"/>
</dbReference>
<dbReference type="Pfam" id="PF02826">
    <property type="entry name" value="2-Hacid_dh_C"/>
    <property type="match status" value="1"/>
</dbReference>
<dbReference type="Pfam" id="PF01842">
    <property type="entry name" value="ACT"/>
    <property type="match status" value="1"/>
</dbReference>
<dbReference type="Pfam" id="PF19304">
    <property type="entry name" value="PGDH_inter"/>
    <property type="match status" value="1"/>
</dbReference>
<dbReference type="SUPFAM" id="SSF55021">
    <property type="entry name" value="ACT-like"/>
    <property type="match status" value="1"/>
</dbReference>
<dbReference type="SUPFAM" id="SSF52283">
    <property type="entry name" value="Formate/glycerate dehydrogenase catalytic domain-like"/>
    <property type="match status" value="1"/>
</dbReference>
<dbReference type="SUPFAM" id="SSF51735">
    <property type="entry name" value="NAD(P)-binding Rossmann-fold domains"/>
    <property type="match status" value="1"/>
</dbReference>
<dbReference type="SUPFAM" id="SSF143548">
    <property type="entry name" value="Serine metabolism enzymes domain"/>
    <property type="match status" value="1"/>
</dbReference>
<dbReference type="PROSITE" id="PS51671">
    <property type="entry name" value="ACT"/>
    <property type="match status" value="1"/>
</dbReference>
<dbReference type="PROSITE" id="PS00065">
    <property type="entry name" value="D_2_HYDROXYACID_DH_1"/>
    <property type="match status" value="1"/>
</dbReference>
<dbReference type="PROSITE" id="PS00670">
    <property type="entry name" value="D_2_HYDROXYACID_DH_2"/>
    <property type="match status" value="1"/>
</dbReference>
<dbReference type="PROSITE" id="PS00671">
    <property type="entry name" value="D_2_HYDROXYACID_DH_3"/>
    <property type="match status" value="1"/>
</dbReference>
<sequence length="554" mass="59222">MNLAWLQGLSLGLLSPPAPALLIFRSFTMAKVLVSDSIDQVGIDILKQVAQVDVKTGLSEAEIIDIVPEYDAIMLRSATKVTEKIIQAGSQLKIIGRAGVGVDNIDVPAATRQGIVVVNSPEGNTIAAAEHALAMMMALARHIPDANKSVKESKWERKQFIGTEVYKKTLGVVGLGKIGSHVAGVAKAMGMKLLAYDPFISQERADQIGCTLVDLDLLFSEADFITLHIPKTPETANLINAETLAKMKPTARIINCSRGGIIDEEALVTAIETAQIGGAALDVFAQEPLGESRLREFSNVILTPHLGASTEEAQVNVAVDVAEQIRDVLLGLPARSAVNIPGLTPDVMEKLRPYLKLAETLGTLVGQLAGGRIDRLTVCLQGDLAEYTNSQPLVVAAIKGLLSQALRERVNYVNAAIEAKERGIRVIETKDASVRDYSGSLHLKATGTMGEHSATGALLSNGEIRITDVDEFPINVPPNNYMLFTLHRDMPGIIGKIGSLLGSFNVNIASMQVGRKIVRGDAIMALSLDDPLPDGLLSEITKVAGIRDAYTVKL</sequence>
<keyword id="KW-0028">Amino-acid biosynthesis</keyword>
<keyword id="KW-0520">NAD</keyword>
<keyword id="KW-0560">Oxidoreductase</keyword>
<keyword id="KW-1185">Reference proteome</keyword>
<keyword id="KW-0718">Serine biosynthesis</keyword>
<evidence type="ECO:0000250" key="1"/>
<evidence type="ECO:0000250" key="2">
    <source>
        <dbReference type="UniProtKB" id="P0A9T0"/>
    </source>
</evidence>
<evidence type="ECO:0000255" key="3">
    <source>
        <dbReference type="PROSITE-ProRule" id="PRU01007"/>
    </source>
</evidence>
<evidence type="ECO:0000305" key="4"/>